<comment type="similarity">
    <text evidence="1">Belongs to the UPF0325 family.</text>
</comment>
<sequence>MYDNLKSLGITNPEEIDRYSLRQEANNDILKIYFQKDRGEFFAKSVKFKYPRQRKTVVADGIGQGYKEVQEISPNLRYVIDELDQICQRDRSELDLKRKILDDLRHLESVVANKISEIEADLDKLTRK</sequence>
<proteinExistence type="inferred from homology"/>
<evidence type="ECO:0000255" key="1">
    <source>
        <dbReference type="HAMAP-Rule" id="MF_01519"/>
    </source>
</evidence>
<accession>B5FJ11</accession>
<reference key="1">
    <citation type="journal article" date="2011" name="J. Bacteriol.">
        <title>Comparative genomics of 28 Salmonella enterica isolates: evidence for CRISPR-mediated adaptive sublineage evolution.</title>
        <authorList>
            <person name="Fricke W.F."/>
            <person name="Mammel M.K."/>
            <person name="McDermott P.F."/>
            <person name="Tartera C."/>
            <person name="White D.G."/>
            <person name="Leclerc J.E."/>
            <person name="Ravel J."/>
            <person name="Cebula T.A."/>
        </authorList>
    </citation>
    <scope>NUCLEOTIDE SEQUENCE [LARGE SCALE GENOMIC DNA]</scope>
    <source>
        <strain>CT_02021853</strain>
    </source>
</reference>
<feature type="chain" id="PRO_1000198436" description="UPF0325 protein YaeH">
    <location>
        <begin position="1"/>
        <end position="128"/>
    </location>
</feature>
<gene>
    <name evidence="1" type="primary">yaeH</name>
    <name type="ordered locus">SeD_A0232</name>
</gene>
<organism>
    <name type="scientific">Salmonella dublin (strain CT_02021853)</name>
    <dbReference type="NCBI Taxonomy" id="439851"/>
    <lineage>
        <taxon>Bacteria</taxon>
        <taxon>Pseudomonadati</taxon>
        <taxon>Pseudomonadota</taxon>
        <taxon>Gammaproteobacteria</taxon>
        <taxon>Enterobacterales</taxon>
        <taxon>Enterobacteriaceae</taxon>
        <taxon>Salmonella</taxon>
    </lineage>
</organism>
<protein>
    <recommendedName>
        <fullName evidence="1">UPF0325 protein YaeH</fullName>
    </recommendedName>
</protein>
<name>YAEH_SALDC</name>
<dbReference type="EMBL" id="CP001144">
    <property type="protein sequence ID" value="ACH77281.1"/>
    <property type="molecule type" value="Genomic_DNA"/>
</dbReference>
<dbReference type="RefSeq" id="WP_000272193.1">
    <property type="nucleotide sequence ID" value="NC_011205.1"/>
</dbReference>
<dbReference type="SMR" id="B5FJ11"/>
<dbReference type="KEGG" id="sed:SeD_A0232"/>
<dbReference type="HOGENOM" id="CLU_136774_0_0_6"/>
<dbReference type="Proteomes" id="UP000008322">
    <property type="component" value="Chromosome"/>
</dbReference>
<dbReference type="HAMAP" id="MF_01519">
    <property type="entry name" value="UPF0325"/>
    <property type="match status" value="1"/>
</dbReference>
<dbReference type="InterPro" id="IPR020911">
    <property type="entry name" value="UPF0325"/>
</dbReference>
<dbReference type="NCBIfam" id="NF010213">
    <property type="entry name" value="PRK13677.1"/>
    <property type="match status" value="1"/>
</dbReference>
<dbReference type="Pfam" id="PF11944">
    <property type="entry name" value="DUF3461"/>
    <property type="match status" value="1"/>
</dbReference>